<keyword id="KW-0378">Hydrolase</keyword>
<keyword id="KW-0658">Purine biosynthesis</keyword>
<feature type="chain" id="PRO_0000349163" description="IMP cyclohydrolase">
    <location>
        <begin position="1"/>
        <end position="201"/>
    </location>
</feature>
<gene>
    <name evidence="1" type="primary">purO</name>
    <name type="ordered locus">MmarC5_0283</name>
</gene>
<organism>
    <name type="scientific">Methanococcus maripaludis (strain C5 / ATCC BAA-1333)</name>
    <dbReference type="NCBI Taxonomy" id="402880"/>
    <lineage>
        <taxon>Archaea</taxon>
        <taxon>Methanobacteriati</taxon>
        <taxon>Methanobacteriota</taxon>
        <taxon>Methanomada group</taxon>
        <taxon>Methanococci</taxon>
        <taxon>Methanococcales</taxon>
        <taxon>Methanococcaceae</taxon>
        <taxon>Methanococcus</taxon>
    </lineage>
</organism>
<protein>
    <recommendedName>
        <fullName evidence="1">IMP cyclohydrolase</fullName>
        <ecNumber evidence="1">3.5.4.10</ecNumber>
    </recommendedName>
    <alternativeName>
        <fullName evidence="1">IMP synthase</fullName>
    </alternativeName>
    <alternativeName>
        <fullName evidence="1">Inosinicase</fullName>
    </alternativeName>
</protein>
<dbReference type="EC" id="3.5.4.10" evidence="1"/>
<dbReference type="EMBL" id="CP000609">
    <property type="protein sequence ID" value="ABO34599.1"/>
    <property type="molecule type" value="Genomic_DNA"/>
</dbReference>
<dbReference type="RefSeq" id="WP_011868054.1">
    <property type="nucleotide sequence ID" value="NC_009135.1"/>
</dbReference>
<dbReference type="SMR" id="A4FWM4"/>
<dbReference type="STRING" id="402880.MmarC5_0283"/>
<dbReference type="GeneID" id="4928631"/>
<dbReference type="KEGG" id="mmq:MmarC5_0283"/>
<dbReference type="eggNOG" id="arCOG04727">
    <property type="taxonomic scope" value="Archaea"/>
</dbReference>
<dbReference type="HOGENOM" id="CLU_1352116_0_0_2"/>
<dbReference type="OrthoDB" id="92928at2157"/>
<dbReference type="UniPathway" id="UPA00074">
    <property type="reaction ID" value="UER00135"/>
</dbReference>
<dbReference type="Proteomes" id="UP000000253">
    <property type="component" value="Chromosome"/>
</dbReference>
<dbReference type="GO" id="GO:0003937">
    <property type="term" value="F:IMP cyclohydrolase activity"/>
    <property type="evidence" value="ECO:0007669"/>
    <property type="project" value="UniProtKB-UniRule"/>
</dbReference>
<dbReference type="GO" id="GO:0006189">
    <property type="term" value="P:'de novo' IMP biosynthetic process"/>
    <property type="evidence" value="ECO:0007669"/>
    <property type="project" value="UniProtKB-UniRule"/>
</dbReference>
<dbReference type="Gene3D" id="3.60.20.20">
    <property type="entry name" value="Inosine monophosphate cyclohydrolase-like"/>
    <property type="match status" value="1"/>
</dbReference>
<dbReference type="HAMAP" id="MF_00705">
    <property type="entry name" value="IMP_cyclohydrol"/>
    <property type="match status" value="1"/>
</dbReference>
<dbReference type="InterPro" id="IPR010191">
    <property type="entry name" value="IMP_cyclohydrolase"/>
</dbReference>
<dbReference type="InterPro" id="IPR020600">
    <property type="entry name" value="IMP_cyclohydrolase-like"/>
</dbReference>
<dbReference type="InterPro" id="IPR036795">
    <property type="entry name" value="IMP_cyclohydrolase-like_sf"/>
</dbReference>
<dbReference type="NCBIfam" id="NF003167">
    <property type="entry name" value="PRK04151.1"/>
    <property type="match status" value="1"/>
</dbReference>
<dbReference type="NCBIfam" id="TIGR01922">
    <property type="entry name" value="purO_arch"/>
    <property type="match status" value="1"/>
</dbReference>
<dbReference type="Pfam" id="PF07826">
    <property type="entry name" value="IMP_cyclohyd"/>
    <property type="match status" value="1"/>
</dbReference>
<dbReference type="PIRSF" id="PIRSF004866">
    <property type="entry name" value="IMP_cclhdr_arch"/>
    <property type="match status" value="1"/>
</dbReference>
<dbReference type="SUPFAM" id="SSF75569">
    <property type="entry name" value="Archaeal IMP cyclohydrolase PurO"/>
    <property type="match status" value="1"/>
</dbReference>
<proteinExistence type="inferred from homology"/>
<sequence>MYIGRFLVFGKTEEGYPFVTYRVSSRSFPNRLAKVMDDDTVSILPKELEEMFKNPYITYNCVKLVGDVAVATNGSHTDIIADKIKLGLPIRDALSYSLLTMDYEKDDYNTPRIAVVITKDEAYMGYVTDSDVRIKKVELEAGKAYYLGVYDACKITEHQVISVTGKTAEDLTKFVMDYEEFEKPVTAATVLVKDGFKLATL</sequence>
<accession>A4FWM4</accession>
<reference key="1">
    <citation type="submission" date="2007-03" db="EMBL/GenBank/DDBJ databases">
        <title>Complete sequence of chromosome of Methanococcus maripaludis C5.</title>
        <authorList>
            <consortium name="US DOE Joint Genome Institute"/>
            <person name="Copeland A."/>
            <person name="Lucas S."/>
            <person name="Lapidus A."/>
            <person name="Barry K."/>
            <person name="Glavina del Rio T."/>
            <person name="Dalin E."/>
            <person name="Tice H."/>
            <person name="Pitluck S."/>
            <person name="Chertkov O."/>
            <person name="Brettin T."/>
            <person name="Bruce D."/>
            <person name="Han C."/>
            <person name="Detter J.C."/>
            <person name="Schmutz J."/>
            <person name="Larimer F."/>
            <person name="Land M."/>
            <person name="Hauser L."/>
            <person name="Kyrpides N."/>
            <person name="Mikhailova N."/>
            <person name="Sieprawska-Lupa M."/>
            <person name="Whitman W.B."/>
            <person name="Richardson P."/>
        </authorList>
    </citation>
    <scope>NUCLEOTIDE SEQUENCE [LARGE SCALE GENOMIC DNA]</scope>
    <source>
        <strain>C5 / ATCC BAA-1333</strain>
    </source>
</reference>
<comment type="function">
    <text evidence="1">Catalyzes the cyclization of 5-formylamidoimidazole-4-carboxamide ribonucleotide to IMP.</text>
</comment>
<comment type="catalytic activity">
    <reaction evidence="1">
        <text>IMP + H2O = 5-formamido-1-(5-phospho-D-ribosyl)imidazole-4-carboxamide</text>
        <dbReference type="Rhea" id="RHEA:18445"/>
        <dbReference type="ChEBI" id="CHEBI:15377"/>
        <dbReference type="ChEBI" id="CHEBI:58053"/>
        <dbReference type="ChEBI" id="CHEBI:58467"/>
        <dbReference type="EC" id="3.5.4.10"/>
    </reaction>
</comment>
<comment type="pathway">
    <text evidence="1">Purine metabolism; IMP biosynthesis via de novo pathway; IMP from 5-formamido-1-(5-phospho-D-ribosyl)imidazole-4-carboxamide: step 1/1.</text>
</comment>
<comment type="similarity">
    <text evidence="1">Belongs to the archaeal IMP cyclohydrolase family.</text>
</comment>
<evidence type="ECO:0000255" key="1">
    <source>
        <dbReference type="HAMAP-Rule" id="MF_00705"/>
    </source>
</evidence>
<name>PURO_METM5</name>